<protein>
    <recommendedName>
        <fullName evidence="1">CDP-archaeol synthase</fullName>
        <ecNumber evidence="1">2.7.7.67</ecNumber>
    </recommendedName>
    <alternativeName>
        <fullName evidence="1">CDP-2,3-bis-(O-geranylgeranyl)-sn-glycerol synthase</fullName>
    </alternativeName>
</protein>
<gene>
    <name evidence="1" type="primary">carS</name>
    <name type="ordered locus">NP_0990A</name>
</gene>
<dbReference type="EC" id="2.7.7.67" evidence="1"/>
<dbReference type="EMBL" id="CR936257">
    <property type="protein sequence ID" value="CAI48586.1"/>
    <property type="molecule type" value="Genomic_DNA"/>
</dbReference>
<dbReference type="RefSeq" id="WP_011322221.1">
    <property type="nucleotide sequence ID" value="NC_007426.1"/>
</dbReference>
<dbReference type="SMR" id="Q3ITE8"/>
<dbReference type="STRING" id="348780.NP_0990A"/>
<dbReference type="EnsemblBacteria" id="CAI48586">
    <property type="protein sequence ID" value="CAI48586"/>
    <property type="gene ID" value="NP_0990A"/>
</dbReference>
<dbReference type="GeneID" id="3702595"/>
<dbReference type="KEGG" id="nph:NP_0990A"/>
<dbReference type="eggNOG" id="arCOG04106">
    <property type="taxonomic scope" value="Archaea"/>
</dbReference>
<dbReference type="HOGENOM" id="CLU_105710_0_0_2"/>
<dbReference type="OrthoDB" id="45383at2157"/>
<dbReference type="UniPathway" id="UPA00940"/>
<dbReference type="Proteomes" id="UP000002698">
    <property type="component" value="Chromosome"/>
</dbReference>
<dbReference type="GO" id="GO:0005886">
    <property type="term" value="C:plasma membrane"/>
    <property type="evidence" value="ECO:0007669"/>
    <property type="project" value="UniProtKB-SubCell"/>
</dbReference>
<dbReference type="GO" id="GO:0043338">
    <property type="term" value="F:CDP-2,3-bis-(O-geranylgeranyl)-sn-glycerol synthase activity"/>
    <property type="evidence" value="ECO:0007669"/>
    <property type="project" value="UniProtKB-EC"/>
</dbReference>
<dbReference type="GO" id="GO:0046474">
    <property type="term" value="P:glycerophospholipid biosynthetic process"/>
    <property type="evidence" value="ECO:0007669"/>
    <property type="project" value="UniProtKB-UniRule"/>
</dbReference>
<dbReference type="HAMAP" id="MF_01117">
    <property type="entry name" value="CDP_archaeol_synth"/>
    <property type="match status" value="1"/>
</dbReference>
<dbReference type="InterPro" id="IPR032690">
    <property type="entry name" value="CarS"/>
</dbReference>
<dbReference type="InterPro" id="IPR002726">
    <property type="entry name" value="CarS_archaea"/>
</dbReference>
<dbReference type="NCBIfam" id="NF003114">
    <property type="entry name" value="PRK04032.1"/>
    <property type="match status" value="1"/>
</dbReference>
<dbReference type="PANTHER" id="PTHR39650">
    <property type="entry name" value="CDP-ARCHAEOL SYNTHASE"/>
    <property type="match status" value="1"/>
</dbReference>
<dbReference type="PANTHER" id="PTHR39650:SF1">
    <property type="entry name" value="CDP-ARCHAEOL SYNTHASE"/>
    <property type="match status" value="1"/>
</dbReference>
<dbReference type="Pfam" id="PF01864">
    <property type="entry name" value="CarS-like"/>
    <property type="match status" value="1"/>
</dbReference>
<accession>Q3ITE8</accession>
<proteinExistence type="inferred from homology"/>
<feature type="chain" id="PRO_0000298283" description="CDP-archaeol synthase">
    <location>
        <begin position="1"/>
        <end position="189"/>
    </location>
</feature>
<feature type="transmembrane region" description="Helical" evidence="1">
    <location>
        <begin position="6"/>
        <end position="26"/>
    </location>
</feature>
<feature type="transmembrane region" description="Helical" evidence="1">
    <location>
        <begin position="71"/>
        <end position="91"/>
    </location>
</feature>
<feature type="transmembrane region" description="Helical" evidence="1">
    <location>
        <begin position="96"/>
        <end position="116"/>
    </location>
</feature>
<feature type="transmembrane region" description="Helical" evidence="1">
    <location>
        <begin position="125"/>
        <end position="145"/>
    </location>
</feature>
<feature type="transmembrane region" description="Helical" evidence="1">
    <location>
        <begin position="162"/>
        <end position="184"/>
    </location>
</feature>
<keyword id="KW-1003">Cell membrane</keyword>
<keyword id="KW-0444">Lipid biosynthesis</keyword>
<keyword id="KW-0443">Lipid metabolism</keyword>
<keyword id="KW-0460">Magnesium</keyword>
<keyword id="KW-0472">Membrane</keyword>
<keyword id="KW-0594">Phospholipid biosynthesis</keyword>
<keyword id="KW-1208">Phospholipid metabolism</keyword>
<keyword id="KW-1185">Reference proteome</keyword>
<keyword id="KW-0808">Transferase</keyword>
<keyword id="KW-0812">Transmembrane</keyword>
<keyword id="KW-1133">Transmembrane helix</keyword>
<organism>
    <name type="scientific">Natronomonas pharaonis (strain ATCC 35678 / DSM 2160 / CIP 103997 / JCM 8858 / NBRC 14720 / NCIMB 2260 / Gabara)</name>
    <name type="common">Halobacterium pharaonis</name>
    <dbReference type="NCBI Taxonomy" id="348780"/>
    <lineage>
        <taxon>Archaea</taxon>
        <taxon>Methanobacteriati</taxon>
        <taxon>Methanobacteriota</taxon>
        <taxon>Stenosarchaea group</taxon>
        <taxon>Halobacteria</taxon>
        <taxon>Halobacteriales</taxon>
        <taxon>Haloarculaceae</taxon>
        <taxon>Natronomonas</taxon>
    </lineage>
</organism>
<name>CDPAS_NATPD</name>
<comment type="function">
    <text evidence="1">Catalyzes the formation of CDP-2,3-bis-(O-geranylgeranyl)-sn-glycerol (CDP-archaeol) from 2,3-bis-(O-geranylgeranyl)-sn-glycerol 1-phosphate (DGGGP) and CTP. This reaction is the third ether-bond-formation step in the biosynthesis of archaeal membrane lipids.</text>
</comment>
<comment type="catalytic activity">
    <reaction evidence="1">
        <text>2,3-bis-O-(geranylgeranyl)-sn-glycerol 1-phosphate + CTP + H(+) = CDP-2,3-bis-O-(geranylgeranyl)-sn-glycerol + diphosphate</text>
        <dbReference type="Rhea" id="RHEA:25690"/>
        <dbReference type="ChEBI" id="CHEBI:15378"/>
        <dbReference type="ChEBI" id="CHEBI:33019"/>
        <dbReference type="ChEBI" id="CHEBI:37563"/>
        <dbReference type="ChEBI" id="CHEBI:58837"/>
        <dbReference type="ChEBI" id="CHEBI:58838"/>
        <dbReference type="EC" id="2.7.7.67"/>
    </reaction>
</comment>
<comment type="cofactor">
    <cofactor evidence="1">
        <name>Mg(2+)</name>
        <dbReference type="ChEBI" id="CHEBI:18420"/>
    </cofactor>
</comment>
<comment type="pathway">
    <text evidence="1">Membrane lipid metabolism; glycerophospholipid metabolism.</text>
</comment>
<comment type="subcellular location">
    <subcellularLocation>
        <location evidence="1">Cell membrane</location>
        <topology evidence="1">Multi-pass membrane protein</topology>
    </subcellularLocation>
</comment>
<comment type="similarity">
    <text evidence="1">Belongs to the CDP-archaeol synthase family.</text>
</comment>
<reference key="1">
    <citation type="journal article" date="2005" name="Genome Res.">
        <title>Living with two extremes: conclusions from the genome sequence of Natronomonas pharaonis.</title>
        <authorList>
            <person name="Falb M."/>
            <person name="Pfeiffer F."/>
            <person name="Palm P."/>
            <person name="Rodewald K."/>
            <person name="Hickmann V."/>
            <person name="Tittor J."/>
            <person name="Oesterhelt D."/>
        </authorList>
    </citation>
    <scope>NUCLEOTIDE SEQUENCE [LARGE SCALE GENOMIC DNA]</scope>
    <source>
        <strain>ATCC 35678 / DSM 2160 / CIP 103997 / JCM 8858 / NBRC 14720 / NCIMB 2260 / Gabara</strain>
    </source>
</reference>
<sequence length="189" mass="19794">MVAETVAIAVWAMLPAYVPNNVAVLAGGGRPIDGGRTLDKLTDEDGVLYDENRILGDGKTWRGTAFGTAAGVVLALLLNQLQPFVAGTVGVPQFPIAAAVALAFGAMLGDILASFLKRRTGRQRGAAFPGVDQLDFVIVSLALTAIVATGWFLATFTLPVLVAIFVLTPVLHVSTNGLAYAFGLKDEPW</sequence>
<evidence type="ECO:0000255" key="1">
    <source>
        <dbReference type="HAMAP-Rule" id="MF_01117"/>
    </source>
</evidence>